<organism>
    <name type="scientific">Xenopus laevis</name>
    <name type="common">African clawed frog</name>
    <dbReference type="NCBI Taxonomy" id="8355"/>
    <lineage>
        <taxon>Eukaryota</taxon>
        <taxon>Metazoa</taxon>
        <taxon>Chordata</taxon>
        <taxon>Craniata</taxon>
        <taxon>Vertebrata</taxon>
        <taxon>Euteleostomi</taxon>
        <taxon>Amphibia</taxon>
        <taxon>Batrachia</taxon>
        <taxon>Anura</taxon>
        <taxon>Pipoidea</taxon>
        <taxon>Pipidae</taxon>
        <taxon>Xenopodinae</taxon>
        <taxon>Xenopus</taxon>
        <taxon>Xenopus</taxon>
    </lineage>
</organism>
<dbReference type="EMBL" id="BC073544">
    <property type="protein sequence ID" value="AAH73544.1"/>
    <property type="molecule type" value="mRNA"/>
</dbReference>
<dbReference type="RefSeq" id="NP_001085923.1">
    <property type="nucleotide sequence ID" value="NM_001092454.1"/>
</dbReference>
<dbReference type="RefSeq" id="XP_018100559.1">
    <property type="nucleotide sequence ID" value="XM_018245070.1"/>
</dbReference>
<dbReference type="SMR" id="Q6GNG8"/>
<dbReference type="GeneID" id="444352"/>
<dbReference type="KEGG" id="xla:444352"/>
<dbReference type="AGR" id="Xenbase:XB-GENE-986511"/>
<dbReference type="CTD" id="444352"/>
<dbReference type="Xenbase" id="XB-GENE-986511">
    <property type="gene designation" value="prkrip1.L"/>
</dbReference>
<dbReference type="OMA" id="ETPSFIM"/>
<dbReference type="OrthoDB" id="10067079at2759"/>
<dbReference type="Proteomes" id="UP000186698">
    <property type="component" value="Chromosome 2L"/>
</dbReference>
<dbReference type="Bgee" id="444352">
    <property type="expression patterns" value="Expressed in gastrula and 19 other cell types or tissues"/>
</dbReference>
<dbReference type="GO" id="GO:0005730">
    <property type="term" value="C:nucleolus"/>
    <property type="evidence" value="ECO:0000318"/>
    <property type="project" value="GO_Central"/>
</dbReference>
<dbReference type="GO" id="GO:0005681">
    <property type="term" value="C:spliceosomal complex"/>
    <property type="evidence" value="ECO:0007669"/>
    <property type="project" value="UniProtKB-KW"/>
</dbReference>
<dbReference type="GO" id="GO:0003725">
    <property type="term" value="F:double-stranded RNA binding"/>
    <property type="evidence" value="ECO:0000318"/>
    <property type="project" value="GO_Central"/>
</dbReference>
<dbReference type="GO" id="GO:0019901">
    <property type="term" value="F:protein kinase binding"/>
    <property type="evidence" value="ECO:0000318"/>
    <property type="project" value="GO_Central"/>
</dbReference>
<dbReference type="GO" id="GO:0004860">
    <property type="term" value="F:protein kinase inhibitor activity"/>
    <property type="evidence" value="ECO:0000318"/>
    <property type="project" value="GO_Central"/>
</dbReference>
<dbReference type="GO" id="GO:0006397">
    <property type="term" value="P:mRNA processing"/>
    <property type="evidence" value="ECO:0007669"/>
    <property type="project" value="UniProtKB-KW"/>
</dbReference>
<dbReference type="GO" id="GO:0008380">
    <property type="term" value="P:RNA splicing"/>
    <property type="evidence" value="ECO:0007669"/>
    <property type="project" value="UniProtKB-KW"/>
</dbReference>
<dbReference type="InterPro" id="IPR009548">
    <property type="entry name" value="Prkrip1"/>
</dbReference>
<dbReference type="PANTHER" id="PTHR13507">
    <property type="entry name" value="PRKR-INTERACTING PROTEIN 1"/>
    <property type="match status" value="1"/>
</dbReference>
<dbReference type="PANTHER" id="PTHR13507:SF0">
    <property type="entry name" value="PRKR-INTERACTING PROTEIN 1"/>
    <property type="match status" value="1"/>
</dbReference>
<dbReference type="Pfam" id="PF06658">
    <property type="entry name" value="DUF1168"/>
    <property type="match status" value="1"/>
</dbReference>
<reference key="1">
    <citation type="submission" date="2004-06" db="EMBL/GenBank/DDBJ databases">
        <authorList>
            <consortium name="NIH - Xenopus Gene Collection (XGC) project"/>
        </authorList>
    </citation>
    <scope>NUCLEOTIDE SEQUENCE [LARGE SCALE MRNA]</scope>
    <source>
        <tissue>Spleen</tissue>
    </source>
</reference>
<sequence>MAKETGTAKPARQKKEPQPLVIPKNATDEQRLKLERLMRNPDKPATVPERPKEWSPRSAPEFVRDVMGSSAGAGSGEFHVYRHLRRREYQRQEFLDGMSEKQRLDEEYKKKLIQNKMLEEERTAKRRLKRQKLKEKKKMCKKGKKEEKKEDKDGHTDPENSAESSDKSDLEDQ</sequence>
<gene>
    <name type="primary">prkrip1</name>
</gene>
<proteinExistence type="evidence at transcript level"/>
<protein>
    <recommendedName>
        <fullName>PRKR-interacting protein 1 homolog</fullName>
    </recommendedName>
</protein>
<name>PKRI1_XENLA</name>
<evidence type="ECO:0000250" key="1"/>
<evidence type="ECO:0000250" key="2">
    <source>
        <dbReference type="UniProtKB" id="Q9CWV6"/>
    </source>
</evidence>
<evidence type="ECO:0000250" key="3">
    <source>
        <dbReference type="UniProtKB" id="Q9H875"/>
    </source>
</evidence>
<evidence type="ECO:0000255" key="4"/>
<evidence type="ECO:0000256" key="5">
    <source>
        <dbReference type="SAM" id="MobiDB-lite"/>
    </source>
</evidence>
<evidence type="ECO:0000305" key="6"/>
<accession>Q6GNG8</accession>
<comment type="function">
    <text evidence="2 3">Required for pre-mRNA splicing as component of the spliceosome (By similarity). Binds double-stranded RNA (By similarity).</text>
</comment>
<comment type="subunit">
    <text evidence="3">Component of the pre-catalytic and post-catalytic spliceosome complexes.</text>
</comment>
<comment type="subcellular location">
    <subcellularLocation>
        <location evidence="3">Nucleus</location>
    </subcellularLocation>
    <subcellularLocation>
        <location evidence="2">Nucleus</location>
        <location evidence="2">Nucleolus</location>
    </subcellularLocation>
</comment>
<comment type="similarity">
    <text evidence="6">Belongs to the PRKRIP1 family.</text>
</comment>
<keyword id="KW-0175">Coiled coil</keyword>
<keyword id="KW-0507">mRNA processing</keyword>
<keyword id="KW-0508">mRNA splicing</keyword>
<keyword id="KW-0539">Nucleus</keyword>
<keyword id="KW-1185">Reference proteome</keyword>
<keyword id="KW-0747">Spliceosome</keyword>
<feature type="chain" id="PRO_0000324792" description="PRKR-interacting protein 1 homolog">
    <location>
        <begin position="1"/>
        <end position="173"/>
    </location>
</feature>
<feature type="region of interest" description="Disordered" evidence="5">
    <location>
        <begin position="1"/>
        <end position="59"/>
    </location>
</feature>
<feature type="region of interest" description="Required for RNA-binding" evidence="1">
    <location>
        <begin position="50"/>
        <end position="142"/>
    </location>
</feature>
<feature type="region of interest" description="Disordered" evidence="5">
    <location>
        <begin position="117"/>
        <end position="173"/>
    </location>
</feature>
<feature type="region of interest" description="Required for nuclear localization" evidence="1">
    <location>
        <begin position="125"/>
        <end position="137"/>
    </location>
</feature>
<feature type="coiled-coil region" evidence="4">
    <location>
        <begin position="99"/>
        <end position="150"/>
    </location>
</feature>
<feature type="compositionally biased region" description="Basic and acidic residues" evidence="5">
    <location>
        <begin position="26"/>
        <end position="42"/>
    </location>
</feature>
<feature type="compositionally biased region" description="Basic residues" evidence="5">
    <location>
        <begin position="124"/>
        <end position="143"/>
    </location>
</feature>
<feature type="compositionally biased region" description="Basic and acidic residues" evidence="5">
    <location>
        <begin position="144"/>
        <end position="173"/>
    </location>
</feature>